<protein>
    <recommendedName>
        <fullName>Uncharacterized 11.7 kDa protein</fullName>
    </recommendedName>
</protein>
<evidence type="ECO:0000305" key="1"/>
<proteinExistence type="inferred from homology"/>
<reference key="1">
    <citation type="journal article" date="1997" name="Virology">
        <title>The sequence of the Orgyia pseudotsugata multinucleocapsid nuclear polyhedrosis virus genome.</title>
        <authorList>
            <person name="Ahrens C.H."/>
            <person name="Russell R.R."/>
            <person name="Funk C.J."/>
            <person name="Evans J."/>
            <person name="Harwood S."/>
            <person name="Rohrmann G.F."/>
        </authorList>
    </citation>
    <scope>NUCLEOTIDE SEQUENCE [LARGE SCALE GENOMIC DNA]</scope>
</reference>
<accession>O10347</accession>
<name>Y108_NPVOP</name>
<comment type="similarity">
    <text evidence="1">Belongs to the baculoviridae 11 kDa protein family.</text>
</comment>
<gene>
    <name type="ORF">ORF108</name>
</gene>
<dbReference type="EMBL" id="U75930">
    <property type="protein sequence ID" value="AAC59107.1"/>
    <property type="molecule type" value="Genomic_DNA"/>
</dbReference>
<dbReference type="RefSeq" id="NP_046264.1">
    <property type="nucleotide sequence ID" value="NC_001875.2"/>
</dbReference>
<dbReference type="SMR" id="O10347"/>
<dbReference type="KEGG" id="vg:911973"/>
<dbReference type="OrthoDB" id="21627at10239"/>
<dbReference type="Proteomes" id="UP000009248">
    <property type="component" value="Genome"/>
</dbReference>
<dbReference type="InterPro" id="IPR009313">
    <property type="entry name" value="Baculo_11_kDa"/>
</dbReference>
<dbReference type="Pfam" id="PF06143">
    <property type="entry name" value="Baculo_11_kDa"/>
    <property type="match status" value="1"/>
</dbReference>
<sequence>MATPSHVVSRLTGGRAGNPIVEVIRSNATPTDGDQLEQFVARNRSLIKEFVLVLCGFLVVIMIILFFTLLVAVLTNAYAVQVGRAQFERALQRNYAPPTDASARASTA</sequence>
<keyword id="KW-1185">Reference proteome</keyword>
<feature type="chain" id="PRO_0000133042" description="Uncharacterized 11.7 kDa protein">
    <location>
        <begin position="1"/>
        <end position="108"/>
    </location>
</feature>
<organismHost>
    <name type="scientific">Orgyia pseudotsugata</name>
    <name type="common">Douglas-fir tussock moth</name>
    <dbReference type="NCBI Taxonomy" id="33414"/>
</organismHost>
<organism>
    <name type="scientific">Orgyia pseudotsugata multicapsid polyhedrosis virus</name>
    <name type="common">OpMNPV</name>
    <dbReference type="NCBI Taxonomy" id="262177"/>
    <lineage>
        <taxon>Viruses</taxon>
        <taxon>Viruses incertae sedis</taxon>
        <taxon>Naldaviricetes</taxon>
        <taxon>Lefavirales</taxon>
        <taxon>Baculoviridae</taxon>
        <taxon>Alphabaculovirus</taxon>
        <taxon>Alphabaculovirus orpseudotsugatae</taxon>
    </lineage>
</organism>